<protein>
    <recommendedName>
        <fullName evidence="1">S-adenosylmethionine:tRNA ribosyltransferase-isomerase</fullName>
        <ecNumber evidence="1">2.4.99.17</ecNumber>
    </recommendedName>
    <alternativeName>
        <fullName evidence="1">Queuosine biosynthesis protein QueA</fullName>
    </alternativeName>
</protein>
<sequence length="356" mass="39519">MRVTDFSFELPESLIAHYPQPERSRCRLLSLEGPTGALTHGTFTDLLDKLNPGDVLVFNNTRVIPARLFGRKASGGKIEVLVERMLDDKRILAHIRASKAPKPGTELLLGDDENIHATMTARHGALFEVEFNDERPVLDILNAIGHMPLPPYIDRPDEDADRELYQTVYSEKPGAVAAPTAGLHFDKPLLAALREKGIEMAFVTLHVGAGTFQPVRVDTIEDHIMHSEYAEVPQEVVDAVLAAKARGNRVIAVGTTSVRSLESAAQAAKSDLIEPFFGDTQIFIYPGYQYKVIDALVTNFHLPESTLIMLVSAFAGYEHTMNAYKAAVEQKYRFFSYGDAMFITYNPQAIFERVGE</sequence>
<proteinExistence type="inferred from homology"/>
<accession>A9MM58</accession>
<organism>
    <name type="scientific">Salmonella arizonae (strain ATCC BAA-731 / CDC346-86 / RSK2980)</name>
    <dbReference type="NCBI Taxonomy" id="41514"/>
    <lineage>
        <taxon>Bacteria</taxon>
        <taxon>Pseudomonadati</taxon>
        <taxon>Pseudomonadota</taxon>
        <taxon>Gammaproteobacteria</taxon>
        <taxon>Enterobacterales</taxon>
        <taxon>Enterobacteriaceae</taxon>
        <taxon>Salmonella</taxon>
    </lineage>
</organism>
<comment type="function">
    <text evidence="1">Transfers and isomerizes the ribose moiety from AdoMet to the 7-aminomethyl group of 7-deazaguanine (preQ1-tRNA) to give epoxyqueuosine (oQ-tRNA).</text>
</comment>
<comment type="catalytic activity">
    <reaction evidence="1">
        <text>7-aminomethyl-7-carbaguanosine(34) in tRNA + S-adenosyl-L-methionine = epoxyqueuosine(34) in tRNA + adenine + L-methionine + 2 H(+)</text>
        <dbReference type="Rhea" id="RHEA:32155"/>
        <dbReference type="Rhea" id="RHEA-COMP:10342"/>
        <dbReference type="Rhea" id="RHEA-COMP:18582"/>
        <dbReference type="ChEBI" id="CHEBI:15378"/>
        <dbReference type="ChEBI" id="CHEBI:16708"/>
        <dbReference type="ChEBI" id="CHEBI:57844"/>
        <dbReference type="ChEBI" id="CHEBI:59789"/>
        <dbReference type="ChEBI" id="CHEBI:82833"/>
        <dbReference type="ChEBI" id="CHEBI:194443"/>
        <dbReference type="EC" id="2.4.99.17"/>
    </reaction>
</comment>
<comment type="pathway">
    <text evidence="1">tRNA modification; tRNA-queuosine biosynthesis.</text>
</comment>
<comment type="subunit">
    <text evidence="1">Monomer.</text>
</comment>
<comment type="subcellular location">
    <subcellularLocation>
        <location evidence="1">Cytoplasm</location>
    </subcellularLocation>
</comment>
<comment type="similarity">
    <text evidence="1">Belongs to the QueA family.</text>
</comment>
<evidence type="ECO:0000255" key="1">
    <source>
        <dbReference type="HAMAP-Rule" id="MF_00113"/>
    </source>
</evidence>
<feature type="chain" id="PRO_1000076016" description="S-adenosylmethionine:tRNA ribosyltransferase-isomerase">
    <location>
        <begin position="1"/>
        <end position="356"/>
    </location>
</feature>
<reference key="1">
    <citation type="submission" date="2007-11" db="EMBL/GenBank/DDBJ databases">
        <authorList>
            <consortium name="The Salmonella enterica serovar Arizonae Genome Sequencing Project"/>
            <person name="McClelland M."/>
            <person name="Sanderson E.K."/>
            <person name="Porwollik S."/>
            <person name="Spieth J."/>
            <person name="Clifton W.S."/>
            <person name="Fulton R."/>
            <person name="Chunyan W."/>
            <person name="Wollam A."/>
            <person name="Shah N."/>
            <person name="Pepin K."/>
            <person name="Bhonagiri V."/>
            <person name="Nash W."/>
            <person name="Johnson M."/>
            <person name="Thiruvilangam P."/>
            <person name="Wilson R."/>
        </authorList>
    </citation>
    <scope>NUCLEOTIDE SEQUENCE [LARGE SCALE GENOMIC DNA]</scope>
    <source>
        <strain>ATCC BAA-731 / CDC346-86 / RSK2980</strain>
    </source>
</reference>
<name>QUEA_SALAR</name>
<keyword id="KW-0963">Cytoplasm</keyword>
<keyword id="KW-0671">Queuosine biosynthesis</keyword>
<keyword id="KW-1185">Reference proteome</keyword>
<keyword id="KW-0949">S-adenosyl-L-methionine</keyword>
<keyword id="KW-0808">Transferase</keyword>
<gene>
    <name evidence="1" type="primary">queA</name>
    <name type="ordered locus">SARI_02521</name>
</gene>
<dbReference type="EC" id="2.4.99.17" evidence="1"/>
<dbReference type="EMBL" id="CP000880">
    <property type="protein sequence ID" value="ABX22380.1"/>
    <property type="molecule type" value="Genomic_DNA"/>
</dbReference>
<dbReference type="SMR" id="A9MM58"/>
<dbReference type="STRING" id="41514.SARI_02521"/>
<dbReference type="KEGG" id="ses:SARI_02521"/>
<dbReference type="HOGENOM" id="CLU_039110_1_0_6"/>
<dbReference type="UniPathway" id="UPA00392"/>
<dbReference type="Proteomes" id="UP000002084">
    <property type="component" value="Chromosome"/>
</dbReference>
<dbReference type="GO" id="GO:0005737">
    <property type="term" value="C:cytoplasm"/>
    <property type="evidence" value="ECO:0007669"/>
    <property type="project" value="UniProtKB-SubCell"/>
</dbReference>
<dbReference type="GO" id="GO:0051075">
    <property type="term" value="F:S-adenosylmethionine:tRNA ribosyltransferase-isomerase activity"/>
    <property type="evidence" value="ECO:0007669"/>
    <property type="project" value="UniProtKB-EC"/>
</dbReference>
<dbReference type="GO" id="GO:0008616">
    <property type="term" value="P:queuosine biosynthetic process"/>
    <property type="evidence" value="ECO:0007669"/>
    <property type="project" value="UniProtKB-UniRule"/>
</dbReference>
<dbReference type="GO" id="GO:0002099">
    <property type="term" value="P:tRNA wobble guanine modification"/>
    <property type="evidence" value="ECO:0007669"/>
    <property type="project" value="TreeGrafter"/>
</dbReference>
<dbReference type="FunFam" id="2.40.10.240:FF:000001">
    <property type="entry name" value="S-adenosylmethionine:tRNA ribosyltransferase-isomerase"/>
    <property type="match status" value="1"/>
</dbReference>
<dbReference type="FunFam" id="3.40.1780.10:FF:000001">
    <property type="entry name" value="S-adenosylmethionine:tRNA ribosyltransferase-isomerase"/>
    <property type="match status" value="1"/>
</dbReference>
<dbReference type="Gene3D" id="2.40.10.240">
    <property type="entry name" value="QueA-like"/>
    <property type="match status" value="1"/>
</dbReference>
<dbReference type="Gene3D" id="3.40.1780.10">
    <property type="entry name" value="QueA-like"/>
    <property type="match status" value="1"/>
</dbReference>
<dbReference type="HAMAP" id="MF_00113">
    <property type="entry name" value="QueA"/>
    <property type="match status" value="1"/>
</dbReference>
<dbReference type="InterPro" id="IPR003699">
    <property type="entry name" value="QueA"/>
</dbReference>
<dbReference type="InterPro" id="IPR042118">
    <property type="entry name" value="QueA_dom1"/>
</dbReference>
<dbReference type="InterPro" id="IPR042119">
    <property type="entry name" value="QueA_dom2"/>
</dbReference>
<dbReference type="InterPro" id="IPR036100">
    <property type="entry name" value="QueA_sf"/>
</dbReference>
<dbReference type="NCBIfam" id="NF001140">
    <property type="entry name" value="PRK00147.1"/>
    <property type="match status" value="1"/>
</dbReference>
<dbReference type="NCBIfam" id="TIGR00113">
    <property type="entry name" value="queA"/>
    <property type="match status" value="1"/>
</dbReference>
<dbReference type="PANTHER" id="PTHR30307">
    <property type="entry name" value="S-ADENOSYLMETHIONINE:TRNA RIBOSYLTRANSFERASE-ISOMERASE"/>
    <property type="match status" value="1"/>
</dbReference>
<dbReference type="PANTHER" id="PTHR30307:SF0">
    <property type="entry name" value="S-ADENOSYLMETHIONINE:TRNA RIBOSYLTRANSFERASE-ISOMERASE"/>
    <property type="match status" value="1"/>
</dbReference>
<dbReference type="Pfam" id="PF02547">
    <property type="entry name" value="Queuosine_synth"/>
    <property type="match status" value="1"/>
</dbReference>
<dbReference type="SUPFAM" id="SSF111337">
    <property type="entry name" value="QueA-like"/>
    <property type="match status" value="1"/>
</dbReference>